<sequence>MDLSGKMVKQVEILSDGIVFYEIFRYRLYLISEMSPVNIQGVDLLEGNWGTVGSVIFFKYTIDGKEKTAKDIVEAIDEETKSVTFKIVEGDLMELYKTFIIIVQVDTKGEHNSVTWTFHYEKLKEDVEEPNTLMNFCIEITKDIETYHLK</sequence>
<feature type="chain" id="PRO_0000407853" description="Kirola">
    <location>
        <begin position="1"/>
        <end position="150"/>
    </location>
</feature>
<feature type="modified residue" description="N-acetylmethionine" evidence="3">
    <location>
        <position position="1"/>
    </location>
</feature>
<feature type="sequence variant" evidence="2 3">
    <original>S</original>
    <variation>T</variation>
    <location>
        <position position="54"/>
    </location>
</feature>
<feature type="strand" evidence="9">
    <location>
        <begin position="4"/>
        <end position="12"/>
    </location>
</feature>
<feature type="helix" evidence="9">
    <location>
        <begin position="17"/>
        <end position="25"/>
    </location>
</feature>
<feature type="helix" evidence="9">
    <location>
        <begin position="30"/>
        <end position="34"/>
    </location>
</feature>
<feature type="turn" evidence="9">
    <location>
        <begin position="36"/>
        <end position="38"/>
    </location>
</feature>
<feature type="strand" evidence="9">
    <location>
        <begin position="39"/>
        <end position="47"/>
    </location>
</feature>
<feature type="strand" evidence="9">
    <location>
        <begin position="55"/>
        <end position="62"/>
    </location>
</feature>
<feature type="strand" evidence="9">
    <location>
        <begin position="65"/>
        <end position="77"/>
    </location>
</feature>
<feature type="turn" evidence="9">
    <location>
        <begin position="78"/>
        <end position="81"/>
    </location>
</feature>
<feature type="strand" evidence="9">
    <location>
        <begin position="82"/>
        <end position="90"/>
    </location>
</feature>
<feature type="helix" evidence="9">
    <location>
        <begin position="91"/>
        <end position="94"/>
    </location>
</feature>
<feature type="strand" evidence="9">
    <location>
        <begin position="96"/>
        <end position="107"/>
    </location>
</feature>
<feature type="strand" evidence="10">
    <location>
        <begin position="108"/>
        <end position="110"/>
    </location>
</feature>
<feature type="strand" evidence="9">
    <location>
        <begin position="112"/>
        <end position="124"/>
    </location>
</feature>
<feature type="helix" evidence="9">
    <location>
        <begin position="131"/>
        <end position="145"/>
    </location>
</feature>
<feature type="turn" evidence="9">
    <location>
        <begin position="146"/>
        <end position="148"/>
    </location>
</feature>
<proteinExistence type="evidence at protein level"/>
<protein>
    <recommendedName>
        <fullName evidence="6">Kirola</fullName>
    </recommendedName>
    <allergenName evidence="6">Act d 11</allergenName>
</protein>
<keyword id="KW-0002">3D-structure</keyword>
<keyword id="KW-0007">Acetylation</keyword>
<keyword id="KW-0020">Allergen</keyword>
<keyword id="KW-0903">Direct protein sequencing</keyword>
<accession>P85524</accession>
<reference evidence="8" key="1">
    <citation type="journal article" date="2008" name="BMC Genomics">
        <title>Analysis of expressed sequence tags from Actinidia: applications of a cross species EST database for gene discovery in the areas of flavor, health, color and ripening.</title>
        <authorList>
            <person name="Crowhurst R.N."/>
            <person name="Gleave A.P."/>
            <person name="MacRae E.A."/>
            <person name="Ampomah-Dwamena C."/>
            <person name="Atkinson R.G."/>
            <person name="Beuning L.L."/>
            <person name="Bulley S.M."/>
            <person name="Chagne D."/>
            <person name="Marsh K.B."/>
            <person name="Matich A.J."/>
            <person name="Montefiori M."/>
            <person name="Newcomb R.D."/>
            <person name="Schaffer R.J."/>
            <person name="Usadel B."/>
            <person name="Allan A.C."/>
            <person name="Boldingh H.L."/>
            <person name="Bowen J.H."/>
            <person name="Davy M.W."/>
            <person name="Eckloff R."/>
            <person name="Ferguson A.R."/>
            <person name="Fraser L.G."/>
            <person name="Gera E."/>
            <person name="Hellens R.P."/>
            <person name="Janssen B.J."/>
            <person name="Klages K."/>
            <person name="Lo K.R."/>
            <person name="MacDiarmid R.M."/>
            <person name="Nain B."/>
            <person name="McNeilage M.A."/>
            <person name="Rassam M."/>
            <person name="Richardson A.C."/>
            <person name="Rikkerink E.H."/>
            <person name="Ross G.S."/>
            <person name="Schroder R."/>
            <person name="Snowden K.C."/>
            <person name="Souleyre E.J."/>
            <person name="Templeton M.D."/>
            <person name="Walton E.F."/>
            <person name="Wang D."/>
            <person name="Wang M.Y."/>
            <person name="Wang Y.Y."/>
            <person name="Wood M."/>
            <person name="Wu R."/>
            <person name="Yauk Y.K."/>
            <person name="Laing W.A."/>
        </authorList>
    </citation>
    <scope>NUCLEOTIDE SEQUENCE [MRNA]</scope>
    <scope>VARIANT THR-54</scope>
    <source>
        <tissue evidence="8">Fruit</tissue>
    </source>
</reference>
<reference evidence="8" key="2">
    <citation type="journal article" date="2011" name="Allergy">
        <title>Kiwifruit Act d 11 is the first member of the ripening-related protein family identified as an allergen.</title>
        <authorList>
            <person name="D'Avino R."/>
            <person name="Bernardi M.L."/>
            <person name="Wallner M."/>
            <person name="Palazzo P."/>
            <person name="Camardella L."/>
            <person name="Tuppo L."/>
            <person name="Alessandri C."/>
            <person name="Breiteneder H."/>
            <person name="Ferreira F."/>
            <person name="Ciardiello M.A."/>
            <person name="Mari A."/>
        </authorList>
    </citation>
    <scope>PROTEIN SEQUENCE OF 2-118 AND 129-150</scope>
    <scope>MASS SPECTROMETRY</scope>
    <scope>ACETYLATION AT MET-1</scope>
    <scope>ALLERGENICITY</scope>
    <source>
        <tissue evidence="3">Fruit</tissue>
    </source>
</reference>
<reference evidence="8" key="3">
    <citation type="submission" date="2008-04" db="UniProtKB">
        <title>Kirola, a new allergenic protein in kiwi fruit.</title>
        <authorList>
            <person name="D'Avino R."/>
            <person name="Camardella L."/>
            <person name="Ciardiello M.A."/>
            <person name="Tamburrini M."/>
            <person name="Carratore V."/>
        </authorList>
    </citation>
    <scope>MASS SPECTROMETRY</scope>
    <source>
        <tissue evidence="5">Fruit</tissue>
    </source>
</reference>
<reference key="4">
    <citation type="journal article" date="2013" name="Mol. Immunol.">
        <title>Structural and bioinformatic analysis of the kiwifruit allergen Act d 11, a member of the family of ripening-related proteins.</title>
        <authorList>
            <person name="Chruszcz M."/>
            <person name="Ciardiello M.A."/>
            <person name="Osinski T."/>
            <person name="Majorek K.A."/>
            <person name="Giangrieco I."/>
            <person name="Font J."/>
            <person name="Breiteneder H."/>
            <person name="Thalassinos K."/>
            <person name="Minor W."/>
        </authorList>
    </citation>
    <scope>X-RAY CRYSTALLOGRAPHY (1.50 ANGSTROMS) OF 1-150</scope>
    <scope>SUBUNIT</scope>
    <scope>MASS SPECTROMETRY</scope>
    <source>
        <tissue evidence="7">Fruit</tissue>
    </source>
</reference>
<dbReference type="EMBL" id="FG437290">
    <property type="status" value="NOT_ANNOTATED_CDS"/>
    <property type="molecule type" value="mRNA"/>
</dbReference>
<dbReference type="EMBL" id="FG440357">
    <property type="status" value="NOT_ANNOTATED_CDS"/>
    <property type="molecule type" value="mRNA"/>
</dbReference>
<dbReference type="EMBL" id="FG445803">
    <property type="status" value="NOT_ANNOTATED_CDS"/>
    <property type="molecule type" value="mRNA"/>
</dbReference>
<dbReference type="PDB" id="4IGV">
    <property type="method" value="X-ray"/>
    <property type="resolution" value="1.50 A"/>
    <property type="chains" value="A=1-150"/>
</dbReference>
<dbReference type="PDB" id="4IGW">
    <property type="method" value="X-ray"/>
    <property type="resolution" value="2.55 A"/>
    <property type="chains" value="A/B=1-150"/>
</dbReference>
<dbReference type="PDB" id="4IGX">
    <property type="method" value="X-ray"/>
    <property type="resolution" value="2.35 A"/>
    <property type="chains" value="A/B/C/D=1-150"/>
</dbReference>
<dbReference type="PDB" id="4IGY">
    <property type="method" value="X-ray"/>
    <property type="resolution" value="2.92 A"/>
    <property type="chains" value="A/B/C/D=1-150"/>
</dbReference>
<dbReference type="PDB" id="4IH0">
    <property type="method" value="X-ray"/>
    <property type="resolution" value="1.75 A"/>
    <property type="chains" value="A=1-150"/>
</dbReference>
<dbReference type="PDB" id="4IH2">
    <property type="method" value="X-ray"/>
    <property type="resolution" value="2.00 A"/>
    <property type="chains" value="A=1-150"/>
</dbReference>
<dbReference type="PDB" id="4IHR">
    <property type="method" value="X-ray"/>
    <property type="resolution" value="1.60 A"/>
    <property type="chains" value="A=1-150"/>
</dbReference>
<dbReference type="PDBsum" id="4IGV"/>
<dbReference type="PDBsum" id="4IGW"/>
<dbReference type="PDBsum" id="4IGX"/>
<dbReference type="PDBsum" id="4IGY"/>
<dbReference type="PDBsum" id="4IH0"/>
<dbReference type="PDBsum" id="4IH2"/>
<dbReference type="PDBsum" id="4IHR"/>
<dbReference type="SMR" id="P85524"/>
<dbReference type="Allergome" id="5903">
    <property type="allergen name" value="Act d 11"/>
</dbReference>
<dbReference type="Allergome" id="6135">
    <property type="allergen name" value="Act d 11.0101"/>
</dbReference>
<dbReference type="iPTMnet" id="P85524"/>
<dbReference type="EvolutionaryTrace" id="P85524"/>
<dbReference type="GO" id="GO:0002253">
    <property type="term" value="P:activation of immune response"/>
    <property type="evidence" value="ECO:0000314"/>
    <property type="project" value="UniProtKB"/>
</dbReference>
<dbReference type="GO" id="GO:0006952">
    <property type="term" value="P:defense response"/>
    <property type="evidence" value="ECO:0007669"/>
    <property type="project" value="InterPro"/>
</dbReference>
<dbReference type="CDD" id="cd07816">
    <property type="entry name" value="Bet_v1-like"/>
    <property type="match status" value="1"/>
</dbReference>
<dbReference type="Gene3D" id="3.30.530.20">
    <property type="match status" value="1"/>
</dbReference>
<dbReference type="InterPro" id="IPR000916">
    <property type="entry name" value="Bet_v_I/MLP"/>
</dbReference>
<dbReference type="InterPro" id="IPR051761">
    <property type="entry name" value="MLP-like_ligand-binding"/>
</dbReference>
<dbReference type="InterPro" id="IPR023393">
    <property type="entry name" value="START-like_dom_sf"/>
</dbReference>
<dbReference type="PANTHER" id="PTHR31907">
    <property type="entry name" value="MLP-LIKE PROTEIN 423"/>
    <property type="match status" value="1"/>
</dbReference>
<dbReference type="Pfam" id="PF00407">
    <property type="entry name" value="Bet_v_1"/>
    <property type="match status" value="1"/>
</dbReference>
<dbReference type="SMART" id="SM01037">
    <property type="entry name" value="Bet_v_1"/>
    <property type="match status" value="1"/>
</dbReference>
<dbReference type="SUPFAM" id="SSF55961">
    <property type="entry name" value="Bet v1-like"/>
    <property type="match status" value="1"/>
</dbReference>
<name>KIRO_ACTDE</name>
<evidence type="ECO:0000255" key="1"/>
<evidence type="ECO:0000269" key="2">
    <source>
    </source>
</evidence>
<evidence type="ECO:0000269" key="3">
    <source>
    </source>
</evidence>
<evidence type="ECO:0000269" key="4">
    <source>
    </source>
</evidence>
<evidence type="ECO:0000269" key="5">
    <source ref="3"/>
</evidence>
<evidence type="ECO:0000303" key="6">
    <source>
    </source>
</evidence>
<evidence type="ECO:0000303" key="7">
    <source>
    </source>
</evidence>
<evidence type="ECO:0000305" key="8"/>
<evidence type="ECO:0007829" key="9">
    <source>
        <dbReference type="PDB" id="4IGV"/>
    </source>
</evidence>
<evidence type="ECO:0007829" key="10">
    <source>
        <dbReference type="PDB" id="4IGX"/>
    </source>
</evidence>
<comment type="subunit">
    <text evidence="4">Monomer.</text>
</comment>
<comment type="PTM">
    <text evidence="3">The N-terminus is blocked.</text>
</comment>
<comment type="mass spectrometry"/>
<comment type="mass spectrometry">
    <text>Variant Thr-54.</text>
</comment>
<comment type="mass spectrometry"/>
<comment type="allergen">
    <text evidence="3">Causes an allergic reaction in human. Binds to IgE.</text>
</comment>
<comment type="similarity">
    <text evidence="1">Belongs to the MLP family.</text>
</comment>
<organism>
    <name type="scientific">Actinidia deliciosa</name>
    <name type="common">Kiwi</name>
    <dbReference type="NCBI Taxonomy" id="3627"/>
    <lineage>
        <taxon>Eukaryota</taxon>
        <taxon>Viridiplantae</taxon>
        <taxon>Streptophyta</taxon>
        <taxon>Embryophyta</taxon>
        <taxon>Tracheophyta</taxon>
        <taxon>Spermatophyta</taxon>
        <taxon>Magnoliopsida</taxon>
        <taxon>eudicotyledons</taxon>
        <taxon>Gunneridae</taxon>
        <taxon>Pentapetalae</taxon>
        <taxon>asterids</taxon>
        <taxon>Ericales</taxon>
        <taxon>Actinidiaceae</taxon>
        <taxon>Actinidia</taxon>
    </lineage>
</organism>